<feature type="chain" id="PRO_1000185601" description="Bifunctional protein FolD">
    <location>
        <begin position="1"/>
        <end position="297"/>
    </location>
</feature>
<feature type="binding site" evidence="1">
    <location>
        <begin position="167"/>
        <end position="169"/>
    </location>
    <ligand>
        <name>NADP(+)</name>
        <dbReference type="ChEBI" id="CHEBI:58349"/>
    </ligand>
</feature>
<feature type="binding site" evidence="1">
    <location>
        <position position="192"/>
    </location>
    <ligand>
        <name>NADP(+)</name>
        <dbReference type="ChEBI" id="CHEBI:58349"/>
    </ligand>
</feature>
<feature type="binding site" evidence="1">
    <location>
        <position position="233"/>
    </location>
    <ligand>
        <name>NADP(+)</name>
        <dbReference type="ChEBI" id="CHEBI:58349"/>
    </ligand>
</feature>
<comment type="function">
    <text evidence="1">Catalyzes the oxidation of 5,10-methylenetetrahydrofolate to 5,10-methenyltetrahydrofolate and then the hydrolysis of 5,10-methenyltetrahydrofolate to 10-formyltetrahydrofolate.</text>
</comment>
<comment type="catalytic activity">
    <reaction evidence="1">
        <text>(6R)-5,10-methylene-5,6,7,8-tetrahydrofolate + NADP(+) = (6R)-5,10-methenyltetrahydrofolate + NADPH</text>
        <dbReference type="Rhea" id="RHEA:22812"/>
        <dbReference type="ChEBI" id="CHEBI:15636"/>
        <dbReference type="ChEBI" id="CHEBI:57455"/>
        <dbReference type="ChEBI" id="CHEBI:57783"/>
        <dbReference type="ChEBI" id="CHEBI:58349"/>
        <dbReference type="EC" id="1.5.1.5"/>
    </reaction>
</comment>
<comment type="catalytic activity">
    <reaction evidence="1">
        <text>(6R)-5,10-methenyltetrahydrofolate + H2O = (6R)-10-formyltetrahydrofolate + H(+)</text>
        <dbReference type="Rhea" id="RHEA:23700"/>
        <dbReference type="ChEBI" id="CHEBI:15377"/>
        <dbReference type="ChEBI" id="CHEBI:15378"/>
        <dbReference type="ChEBI" id="CHEBI:57455"/>
        <dbReference type="ChEBI" id="CHEBI:195366"/>
        <dbReference type="EC" id="3.5.4.9"/>
    </reaction>
</comment>
<comment type="pathway">
    <text evidence="1">One-carbon metabolism; tetrahydrofolate interconversion.</text>
</comment>
<comment type="subunit">
    <text evidence="1">Homodimer.</text>
</comment>
<comment type="similarity">
    <text evidence="1">Belongs to the tetrahydrofolate dehydrogenase/cyclohydrolase family.</text>
</comment>
<gene>
    <name evidence="1" type="primary">folD</name>
    <name type="ordered locus">CCNA_01275</name>
</gene>
<protein>
    <recommendedName>
        <fullName evidence="1">Bifunctional protein FolD</fullName>
    </recommendedName>
    <domain>
        <recommendedName>
            <fullName evidence="1">Methylenetetrahydrofolate dehydrogenase</fullName>
            <ecNumber evidence="1">1.5.1.5</ecNumber>
        </recommendedName>
    </domain>
    <domain>
        <recommendedName>
            <fullName evidence="1">Methenyltetrahydrofolate cyclohydrolase</fullName>
            <ecNumber evidence="1">3.5.4.9</ecNumber>
        </recommendedName>
    </domain>
</protein>
<accession>B8H4A3</accession>
<name>FOLD_CAUVN</name>
<keyword id="KW-0028">Amino-acid biosynthesis</keyword>
<keyword id="KW-0368">Histidine biosynthesis</keyword>
<keyword id="KW-0378">Hydrolase</keyword>
<keyword id="KW-0486">Methionine biosynthesis</keyword>
<keyword id="KW-0511">Multifunctional enzyme</keyword>
<keyword id="KW-0521">NADP</keyword>
<keyword id="KW-0554">One-carbon metabolism</keyword>
<keyword id="KW-0560">Oxidoreductase</keyword>
<keyword id="KW-0658">Purine biosynthesis</keyword>
<keyword id="KW-1185">Reference proteome</keyword>
<dbReference type="EC" id="1.5.1.5" evidence="1"/>
<dbReference type="EC" id="3.5.4.9" evidence="1"/>
<dbReference type="EMBL" id="CP001340">
    <property type="protein sequence ID" value="ACL94740.1"/>
    <property type="molecule type" value="Genomic_DNA"/>
</dbReference>
<dbReference type="RefSeq" id="WP_012640180.1">
    <property type="nucleotide sequence ID" value="NC_011916.1"/>
</dbReference>
<dbReference type="RefSeq" id="YP_002516648.1">
    <property type="nucleotide sequence ID" value="NC_011916.1"/>
</dbReference>
<dbReference type="SMR" id="B8H4A3"/>
<dbReference type="GeneID" id="7333005"/>
<dbReference type="KEGG" id="ccs:CCNA_01275"/>
<dbReference type="PATRIC" id="fig|565050.3.peg.1258"/>
<dbReference type="HOGENOM" id="CLU_034045_2_1_5"/>
<dbReference type="OrthoDB" id="9803580at2"/>
<dbReference type="PhylomeDB" id="B8H4A3"/>
<dbReference type="UniPathway" id="UPA00193"/>
<dbReference type="Proteomes" id="UP000001364">
    <property type="component" value="Chromosome"/>
</dbReference>
<dbReference type="GO" id="GO:0005829">
    <property type="term" value="C:cytosol"/>
    <property type="evidence" value="ECO:0007669"/>
    <property type="project" value="TreeGrafter"/>
</dbReference>
<dbReference type="GO" id="GO:0004477">
    <property type="term" value="F:methenyltetrahydrofolate cyclohydrolase activity"/>
    <property type="evidence" value="ECO:0007669"/>
    <property type="project" value="UniProtKB-UniRule"/>
</dbReference>
<dbReference type="GO" id="GO:0004488">
    <property type="term" value="F:methylenetetrahydrofolate dehydrogenase (NADP+) activity"/>
    <property type="evidence" value="ECO:0007669"/>
    <property type="project" value="UniProtKB-UniRule"/>
</dbReference>
<dbReference type="GO" id="GO:0000105">
    <property type="term" value="P:L-histidine biosynthetic process"/>
    <property type="evidence" value="ECO:0007669"/>
    <property type="project" value="UniProtKB-KW"/>
</dbReference>
<dbReference type="GO" id="GO:0009086">
    <property type="term" value="P:methionine biosynthetic process"/>
    <property type="evidence" value="ECO:0007669"/>
    <property type="project" value="UniProtKB-KW"/>
</dbReference>
<dbReference type="GO" id="GO:0006164">
    <property type="term" value="P:purine nucleotide biosynthetic process"/>
    <property type="evidence" value="ECO:0007669"/>
    <property type="project" value="UniProtKB-KW"/>
</dbReference>
<dbReference type="GO" id="GO:0035999">
    <property type="term" value="P:tetrahydrofolate interconversion"/>
    <property type="evidence" value="ECO:0007669"/>
    <property type="project" value="UniProtKB-UniRule"/>
</dbReference>
<dbReference type="CDD" id="cd01080">
    <property type="entry name" value="NAD_bind_m-THF_DH_Cyclohyd"/>
    <property type="match status" value="1"/>
</dbReference>
<dbReference type="FunFam" id="3.40.50.720:FF:000006">
    <property type="entry name" value="Bifunctional protein FolD"/>
    <property type="match status" value="1"/>
</dbReference>
<dbReference type="FunFam" id="3.40.50.10860:FF:000005">
    <property type="entry name" value="C-1-tetrahydrofolate synthase, cytoplasmic, putative"/>
    <property type="match status" value="1"/>
</dbReference>
<dbReference type="Gene3D" id="3.40.50.10860">
    <property type="entry name" value="Leucine Dehydrogenase, chain A, domain 1"/>
    <property type="match status" value="1"/>
</dbReference>
<dbReference type="Gene3D" id="3.40.50.720">
    <property type="entry name" value="NAD(P)-binding Rossmann-like Domain"/>
    <property type="match status" value="1"/>
</dbReference>
<dbReference type="HAMAP" id="MF_01576">
    <property type="entry name" value="THF_DHG_CYH"/>
    <property type="match status" value="1"/>
</dbReference>
<dbReference type="InterPro" id="IPR046346">
    <property type="entry name" value="Aminoacid_DH-like_N_sf"/>
</dbReference>
<dbReference type="InterPro" id="IPR036291">
    <property type="entry name" value="NAD(P)-bd_dom_sf"/>
</dbReference>
<dbReference type="InterPro" id="IPR000672">
    <property type="entry name" value="THF_DH/CycHdrlase"/>
</dbReference>
<dbReference type="InterPro" id="IPR020630">
    <property type="entry name" value="THF_DH/CycHdrlase_cat_dom"/>
</dbReference>
<dbReference type="InterPro" id="IPR020867">
    <property type="entry name" value="THF_DH/CycHdrlase_CS"/>
</dbReference>
<dbReference type="InterPro" id="IPR020631">
    <property type="entry name" value="THF_DH/CycHdrlase_NAD-bd_dom"/>
</dbReference>
<dbReference type="NCBIfam" id="NF010783">
    <property type="entry name" value="PRK14186.1"/>
    <property type="match status" value="1"/>
</dbReference>
<dbReference type="NCBIfam" id="NF010785">
    <property type="entry name" value="PRK14188.1"/>
    <property type="match status" value="1"/>
</dbReference>
<dbReference type="PANTHER" id="PTHR48099:SF5">
    <property type="entry name" value="C-1-TETRAHYDROFOLATE SYNTHASE, CYTOPLASMIC"/>
    <property type="match status" value="1"/>
</dbReference>
<dbReference type="PANTHER" id="PTHR48099">
    <property type="entry name" value="C-1-TETRAHYDROFOLATE SYNTHASE, CYTOPLASMIC-RELATED"/>
    <property type="match status" value="1"/>
</dbReference>
<dbReference type="Pfam" id="PF00763">
    <property type="entry name" value="THF_DHG_CYH"/>
    <property type="match status" value="1"/>
</dbReference>
<dbReference type="Pfam" id="PF02882">
    <property type="entry name" value="THF_DHG_CYH_C"/>
    <property type="match status" value="1"/>
</dbReference>
<dbReference type="PRINTS" id="PR00085">
    <property type="entry name" value="THFDHDRGNASE"/>
</dbReference>
<dbReference type="SUPFAM" id="SSF53223">
    <property type="entry name" value="Aminoacid dehydrogenase-like, N-terminal domain"/>
    <property type="match status" value="1"/>
</dbReference>
<dbReference type="SUPFAM" id="SSF51735">
    <property type="entry name" value="NAD(P)-binding Rossmann-fold domains"/>
    <property type="match status" value="1"/>
</dbReference>
<dbReference type="PROSITE" id="PS00767">
    <property type="entry name" value="THF_DHG_CYH_2"/>
    <property type="match status" value="1"/>
</dbReference>
<organism>
    <name type="scientific">Caulobacter vibrioides (strain NA1000 / CB15N)</name>
    <name type="common">Caulobacter crescentus</name>
    <dbReference type="NCBI Taxonomy" id="565050"/>
    <lineage>
        <taxon>Bacteria</taxon>
        <taxon>Pseudomonadati</taxon>
        <taxon>Pseudomonadota</taxon>
        <taxon>Alphaproteobacteria</taxon>
        <taxon>Caulobacterales</taxon>
        <taxon>Caulobacteraceae</taxon>
        <taxon>Caulobacter</taxon>
    </lineage>
</organism>
<evidence type="ECO:0000255" key="1">
    <source>
        <dbReference type="HAMAP-Rule" id="MF_01576"/>
    </source>
</evidence>
<reference key="1">
    <citation type="journal article" date="2010" name="J. Bacteriol.">
        <title>The genetic basis of laboratory adaptation in Caulobacter crescentus.</title>
        <authorList>
            <person name="Marks M.E."/>
            <person name="Castro-Rojas C.M."/>
            <person name="Teiling C."/>
            <person name="Du L."/>
            <person name="Kapatral V."/>
            <person name="Walunas T.L."/>
            <person name="Crosson S."/>
        </authorList>
    </citation>
    <scope>NUCLEOTIDE SEQUENCE [LARGE SCALE GENOMIC DNA]</scope>
    <source>
        <strain>NA1000 / CB15N</strain>
    </source>
</reference>
<proteinExistence type="inferred from homology"/>
<sequence length="297" mass="30685">MAQAKLIDGKAFAADLRAKIAEEVAALKAEHGVTPGLAVVLVGEDPASQVYVRNKGEQTTAAGMYSETHRLPETTTQDELLAVVAKLNADPKIHGVLVQFPVPPHISQMDVVAALSPDKDVDGLTVTNAGRLASGLPALAPCTPTGCMMLIRDAIGDLKGKTAVVIGRSNLMGKPMAQMLLAADCTVTIAHSRSQDLPSIVRQADIVVAAVGRAEMVKADWVKPGAVVIDVGITRFPARDPEAAAAGKTRLVGDVAFDEVREVAGAITPVPGGVGPMTIACLLANTLTAAKRLSGIA</sequence>